<keyword id="KW-1185">Reference proteome</keyword>
<organism>
    <name type="scientific">Spinacia oleracea</name>
    <name type="common">Spinach</name>
    <dbReference type="NCBI Taxonomy" id="3562"/>
    <lineage>
        <taxon>Eukaryota</taxon>
        <taxon>Viridiplantae</taxon>
        <taxon>Streptophyta</taxon>
        <taxon>Embryophyta</taxon>
        <taxon>Tracheophyta</taxon>
        <taxon>Spermatophyta</taxon>
        <taxon>Magnoliopsida</taxon>
        <taxon>eudicotyledons</taxon>
        <taxon>Gunneridae</taxon>
        <taxon>Pentapetalae</taxon>
        <taxon>Caryophyllales</taxon>
        <taxon>Chenopodiaceae</taxon>
        <taxon>Chenopodioideae</taxon>
        <taxon>Anserineae</taxon>
        <taxon>Spinacia</taxon>
    </lineage>
</organism>
<evidence type="ECO:0000305" key="1"/>
<reference key="1">
    <citation type="journal article" date="1992" name="FEBS Lett.">
        <title>A plant homologue to mammalian brain 14-3-3 protein and protein kinase C inhibitor.</title>
        <authorList>
            <person name="Hirsch S."/>
            <person name="Aitken A."/>
            <person name="Bertsch U."/>
            <person name="Soll J."/>
        </authorList>
    </citation>
    <scope>NUCLEOTIDE SEQUENCE [MRNA]</scope>
</reference>
<dbReference type="EMBL" id="X62837">
    <property type="protein sequence ID" value="CAA44641.1"/>
    <property type="molecule type" value="mRNA"/>
</dbReference>
<dbReference type="PIR" id="S20581">
    <property type="entry name" value="S20581"/>
</dbReference>
<dbReference type="PIR" id="S68802">
    <property type="entry name" value="S68802"/>
</dbReference>
<dbReference type="SMR" id="P29308"/>
<dbReference type="Proteomes" id="UP001155700">
    <property type="component" value="Unplaced"/>
</dbReference>
<dbReference type="GO" id="GO:0005737">
    <property type="term" value="C:cytoplasm"/>
    <property type="evidence" value="ECO:0000318"/>
    <property type="project" value="GO_Central"/>
</dbReference>
<dbReference type="GO" id="GO:0008104">
    <property type="term" value="P:protein localization"/>
    <property type="evidence" value="ECO:0000318"/>
    <property type="project" value="GO_Central"/>
</dbReference>
<dbReference type="GO" id="GO:0007165">
    <property type="term" value="P:signal transduction"/>
    <property type="evidence" value="ECO:0000318"/>
    <property type="project" value="GO_Central"/>
</dbReference>
<dbReference type="FunFam" id="1.20.190.20:FF:000001">
    <property type="entry name" value="14-3-3 gamma 1"/>
    <property type="match status" value="1"/>
</dbReference>
<dbReference type="Gene3D" id="1.20.190.20">
    <property type="entry name" value="14-3-3 domain"/>
    <property type="match status" value="1"/>
</dbReference>
<dbReference type="InterPro" id="IPR000308">
    <property type="entry name" value="14-3-3"/>
</dbReference>
<dbReference type="InterPro" id="IPR023409">
    <property type="entry name" value="14-3-3_CS"/>
</dbReference>
<dbReference type="InterPro" id="IPR036815">
    <property type="entry name" value="14-3-3_dom_sf"/>
</dbReference>
<dbReference type="InterPro" id="IPR023410">
    <property type="entry name" value="14-3-3_domain"/>
</dbReference>
<dbReference type="PANTHER" id="PTHR18860">
    <property type="entry name" value="14-3-3 PROTEIN"/>
    <property type="match status" value="1"/>
</dbReference>
<dbReference type="Pfam" id="PF00244">
    <property type="entry name" value="14-3-3"/>
    <property type="match status" value="1"/>
</dbReference>
<dbReference type="PIRSF" id="PIRSF000868">
    <property type="entry name" value="14-3-3"/>
    <property type="match status" value="1"/>
</dbReference>
<dbReference type="PRINTS" id="PR00305">
    <property type="entry name" value="1433ZETA"/>
</dbReference>
<dbReference type="SMART" id="SM00101">
    <property type="entry name" value="14_3_3"/>
    <property type="match status" value="1"/>
</dbReference>
<dbReference type="SUPFAM" id="SSF48445">
    <property type="entry name" value="14-3-3 protein"/>
    <property type="match status" value="1"/>
</dbReference>
<dbReference type="PROSITE" id="PS00796">
    <property type="entry name" value="1433_1"/>
    <property type="match status" value="1"/>
</dbReference>
<dbReference type="PROSITE" id="PS00797">
    <property type="entry name" value="1433_2"/>
    <property type="match status" value="1"/>
</dbReference>
<name>1433_SPIOL</name>
<sequence>RNLLSVAYKNVVGARRASWRIISSIEQKEESRGNEDHVSVIRDYRSRIEKELSDNCDGILKLLDTKLVPAASSGDSKVFYLKMKGDYHRYLAEFKTGAQRKEAAESTLTAYKAAQDIANAELAPTHPIRLGLALNFSVFYYEILNSPDRACNLAKQAFVEAIAELDTLGEDSYKDSTLIMQLLRDNLTLWTSDMQDEAADEITEEAAKQQKAVNNNKIAY</sequence>
<comment type="similarity">
    <text evidence="1">Belongs to the 14-3-3 family.</text>
</comment>
<protein>
    <recommendedName>
        <fullName>14-3-3-like protein</fullName>
    </recommendedName>
</protein>
<feature type="chain" id="PRO_0000058705" description="14-3-3-like protein">
    <location>
        <begin position="1" status="less than"/>
        <end position="220"/>
    </location>
</feature>
<feature type="non-terminal residue">
    <location>
        <position position="1"/>
    </location>
</feature>
<accession>P29308</accession>
<proteinExistence type="evidence at transcript level"/>